<accession>P12663</accession>
<gene>
    <name type="primary">RBP3</name>
</gene>
<organism>
    <name type="scientific">Ovis aries</name>
    <name type="common">Sheep</name>
    <dbReference type="NCBI Taxonomy" id="9940"/>
    <lineage>
        <taxon>Eukaryota</taxon>
        <taxon>Metazoa</taxon>
        <taxon>Chordata</taxon>
        <taxon>Craniata</taxon>
        <taxon>Vertebrata</taxon>
        <taxon>Euteleostomi</taxon>
        <taxon>Mammalia</taxon>
        <taxon>Eutheria</taxon>
        <taxon>Laurasiatheria</taxon>
        <taxon>Artiodactyla</taxon>
        <taxon>Ruminantia</taxon>
        <taxon>Pecora</taxon>
        <taxon>Bovidae</taxon>
        <taxon>Caprinae</taxon>
        <taxon>Ovis</taxon>
    </lineage>
</organism>
<dbReference type="PIR" id="A24417">
    <property type="entry name" value="A24417"/>
</dbReference>
<dbReference type="STRING" id="9940.ENSOARP00000001229"/>
<dbReference type="PaxDb" id="9940-ENSOARP00000001229"/>
<dbReference type="eggNOG" id="ENOG502QW81">
    <property type="taxonomic scope" value="Eukaryota"/>
</dbReference>
<dbReference type="Proteomes" id="UP000002356">
    <property type="component" value="Unplaced"/>
</dbReference>
<dbReference type="GO" id="GO:0005576">
    <property type="term" value="C:extracellular region"/>
    <property type="evidence" value="ECO:0007669"/>
    <property type="project" value="UniProtKB-KW"/>
</dbReference>
<dbReference type="GO" id="GO:0033165">
    <property type="term" value="C:interphotoreceptor matrix"/>
    <property type="evidence" value="ECO:0007669"/>
    <property type="project" value="UniProtKB-SubCell"/>
</dbReference>
<dbReference type="GO" id="GO:0016918">
    <property type="term" value="F:retinal binding"/>
    <property type="evidence" value="ECO:0007669"/>
    <property type="project" value="UniProtKB-KW"/>
</dbReference>
<comment type="function">
    <text>IRBP shuttles 11-cis and all trans retinoids between the retinol isomerase in the pigment epithelium and the visual pigments in the photoreceptor cells of the retina.</text>
</comment>
<comment type="subcellular location">
    <subcellularLocation>
        <location>Secreted</location>
        <location>Extracellular space</location>
        <location>Extracellular matrix</location>
        <location>Interphotoreceptor matrix</location>
    </subcellularLocation>
    <text>Interphotoreceptor matrix that permeates the space between the retina and the contiguous layer of pigment epithelium cells.</text>
</comment>
<proteinExistence type="evidence at protein level"/>
<protein>
    <recommendedName>
        <fullName>Retinol-binding protein 3</fullName>
    </recommendedName>
    <alternativeName>
        <fullName>Interphotoreceptor retinoid-binding protein</fullName>
        <shortName>IRBP</shortName>
    </alternativeName>
    <alternativeName>
        <fullName>Interstitial retinol-binding protein</fullName>
    </alternativeName>
</protein>
<sequence length="24" mass="2799">FQPSLVLDMAQVLLDNYTFPENLM</sequence>
<feature type="chain" id="PRO_0000084232" description="Retinol-binding protein 3">
    <location>
        <begin position="1"/>
        <end position="24" status="greater than"/>
    </location>
</feature>
<feature type="non-terminal residue">
    <location>
        <position position="24"/>
    </location>
</feature>
<keyword id="KW-0903">Direct protein sequencing</keyword>
<keyword id="KW-0272">Extracellular matrix</keyword>
<keyword id="KW-1185">Reference proteome</keyword>
<keyword id="KW-0964">Secreted</keyword>
<keyword id="KW-0813">Transport</keyword>
<keyword id="KW-0845">Vitamin A</keyword>
<name>RET3_SHEEP</name>
<reference key="1">
    <citation type="journal article" date="1986" name="FEBS Lett.">
        <title>N-terminal sequence homologies in interstitial retinol-binding proteins from 10 vertebrate species.</title>
        <authorList>
            <person name="Fong S.-L."/>
            <person name="Cook R.G."/>
            <person name="Alvarez R.A."/>
            <person name="Liou G.I."/>
            <person name="Landers R.A."/>
            <person name="Bridges C.D.B."/>
        </authorList>
    </citation>
    <scope>PROTEIN SEQUENCE</scope>
</reference>